<keyword id="KW-0002">3D-structure</keyword>
<keyword id="KW-0963">Cytoplasm</keyword>
<keyword id="KW-0444">Lipid biosynthesis</keyword>
<keyword id="KW-0443">Lipid metabolism</keyword>
<keyword id="KW-0520">NAD</keyword>
<keyword id="KW-0521">NADP</keyword>
<keyword id="KW-0547">Nucleotide-binding</keyword>
<keyword id="KW-0560">Oxidoreductase</keyword>
<keyword id="KW-0594">Phospholipid biosynthesis</keyword>
<keyword id="KW-1208">Phospholipid metabolism</keyword>
<keyword id="KW-1185">Reference proteome</keyword>
<sequence>MEPFKHPIAILGAGSWGTALALVLARKGQKVRLWSYESDHVDEMQAEGVNNRYLPNYPFPETLKAYCDLKASLEGVTDILIVVPSFAFHEVITRMKPLIDAKTRIAWGTKGLAKGSRLLHEVVATELGQVPMAVISGPSLATEVAANLPTAVSLASNNSQFSKDLIERLHGQRFRVYKNDDMIGVELCGSVKNILAIATGISDGLKLGSNARAALITRGLTEMGRLVSVFGGKQETLTGLAGLGDLVLTCTDNQSRNRRFGLALGEGVDKKEAQQAIGQAIEGLYNTDQVHALAQKHAIEMPLTFQVHRILHEDLDPQQAVQELLERSPKAE</sequence>
<comment type="function">
    <text evidence="1">Catalyzes the reduction of the glycolytic intermediate dihydroxyacetone phosphate (DHAP) to sn-glycerol 3-phosphate (G3P), the key precursor for phospholipid synthesis.</text>
</comment>
<comment type="catalytic activity">
    <reaction evidence="1">
        <text>sn-glycerol 3-phosphate + NAD(+) = dihydroxyacetone phosphate + NADH + H(+)</text>
        <dbReference type="Rhea" id="RHEA:11092"/>
        <dbReference type="ChEBI" id="CHEBI:15378"/>
        <dbReference type="ChEBI" id="CHEBI:57540"/>
        <dbReference type="ChEBI" id="CHEBI:57597"/>
        <dbReference type="ChEBI" id="CHEBI:57642"/>
        <dbReference type="ChEBI" id="CHEBI:57945"/>
        <dbReference type="EC" id="1.1.1.94"/>
    </reaction>
    <physiologicalReaction direction="right-to-left" evidence="1">
        <dbReference type="Rhea" id="RHEA:11094"/>
    </physiologicalReaction>
</comment>
<comment type="catalytic activity">
    <reaction evidence="1">
        <text>sn-glycerol 3-phosphate + NADP(+) = dihydroxyacetone phosphate + NADPH + H(+)</text>
        <dbReference type="Rhea" id="RHEA:11096"/>
        <dbReference type="ChEBI" id="CHEBI:15378"/>
        <dbReference type="ChEBI" id="CHEBI:57597"/>
        <dbReference type="ChEBI" id="CHEBI:57642"/>
        <dbReference type="ChEBI" id="CHEBI:57783"/>
        <dbReference type="ChEBI" id="CHEBI:58349"/>
        <dbReference type="EC" id="1.1.1.94"/>
    </reaction>
    <physiologicalReaction direction="right-to-left" evidence="1">
        <dbReference type="Rhea" id="RHEA:11098"/>
    </physiologicalReaction>
</comment>
<comment type="pathway">
    <text evidence="1">Membrane lipid metabolism; glycerophospholipid metabolism.</text>
</comment>
<comment type="subcellular location">
    <subcellularLocation>
        <location evidence="1">Cytoplasm</location>
    </subcellularLocation>
</comment>
<comment type="similarity">
    <text evidence="1">Belongs to the NAD-dependent glycerol-3-phosphate dehydrogenase family.</text>
</comment>
<feature type="chain" id="PRO_0000137953" description="Glycerol-3-phosphate dehydrogenase [NAD(P)+]">
    <location>
        <begin position="1"/>
        <end position="332"/>
    </location>
</feature>
<feature type="active site" description="Proton acceptor" evidence="1">
    <location>
        <position position="192"/>
    </location>
</feature>
<feature type="binding site" evidence="1">
    <location>
        <position position="15"/>
    </location>
    <ligand>
        <name>NADPH</name>
        <dbReference type="ChEBI" id="CHEBI:57783"/>
    </ligand>
</feature>
<feature type="binding site" evidence="1">
    <location>
        <position position="16"/>
    </location>
    <ligand>
        <name>NADPH</name>
        <dbReference type="ChEBI" id="CHEBI:57783"/>
    </ligand>
</feature>
<feature type="binding site" evidence="1">
    <location>
        <position position="110"/>
    </location>
    <ligand>
        <name>NADPH</name>
        <dbReference type="ChEBI" id="CHEBI:57783"/>
    </ligand>
</feature>
<feature type="binding site" evidence="1">
    <location>
        <position position="110"/>
    </location>
    <ligand>
        <name>sn-glycerol 3-phosphate</name>
        <dbReference type="ChEBI" id="CHEBI:57597"/>
    </ligand>
</feature>
<feature type="binding site" evidence="1">
    <location>
        <position position="137"/>
    </location>
    <ligand>
        <name>sn-glycerol 3-phosphate</name>
        <dbReference type="ChEBI" id="CHEBI:57597"/>
    </ligand>
</feature>
<feature type="binding site" evidence="1">
    <location>
        <position position="139"/>
    </location>
    <ligand>
        <name>sn-glycerol 3-phosphate</name>
        <dbReference type="ChEBI" id="CHEBI:57597"/>
    </ligand>
</feature>
<feature type="binding site" evidence="1">
    <location>
        <position position="141"/>
    </location>
    <ligand>
        <name>NADPH</name>
        <dbReference type="ChEBI" id="CHEBI:57783"/>
    </ligand>
</feature>
<feature type="binding site" evidence="1">
    <location>
        <position position="192"/>
    </location>
    <ligand>
        <name>sn-glycerol 3-phosphate</name>
        <dbReference type="ChEBI" id="CHEBI:57597"/>
    </ligand>
</feature>
<feature type="binding site" evidence="1">
    <location>
        <position position="245"/>
    </location>
    <ligand>
        <name>sn-glycerol 3-phosphate</name>
        <dbReference type="ChEBI" id="CHEBI:57597"/>
    </ligand>
</feature>
<feature type="binding site" evidence="1">
    <location>
        <position position="255"/>
    </location>
    <ligand>
        <name>sn-glycerol 3-phosphate</name>
        <dbReference type="ChEBI" id="CHEBI:57597"/>
    </ligand>
</feature>
<feature type="binding site" evidence="1">
    <location>
        <position position="256"/>
    </location>
    <ligand>
        <name>NADPH</name>
        <dbReference type="ChEBI" id="CHEBI:57783"/>
    </ligand>
</feature>
<feature type="binding site" evidence="1">
    <location>
        <position position="256"/>
    </location>
    <ligand>
        <name>sn-glycerol 3-phosphate</name>
        <dbReference type="ChEBI" id="CHEBI:57597"/>
    </ligand>
</feature>
<feature type="binding site" evidence="1">
    <location>
        <position position="257"/>
    </location>
    <ligand>
        <name>sn-glycerol 3-phosphate</name>
        <dbReference type="ChEBI" id="CHEBI:57597"/>
    </ligand>
</feature>
<feature type="binding site" evidence="1">
    <location>
        <position position="282"/>
    </location>
    <ligand>
        <name>NADPH</name>
        <dbReference type="ChEBI" id="CHEBI:57783"/>
    </ligand>
</feature>
<feature type="strand" evidence="2">
    <location>
        <begin position="8"/>
        <end position="11"/>
    </location>
</feature>
<feature type="helix" evidence="2">
    <location>
        <begin position="15"/>
        <end position="25"/>
    </location>
</feature>
<feature type="turn" evidence="2">
    <location>
        <begin position="26"/>
        <end position="28"/>
    </location>
</feature>
<feature type="strand" evidence="2">
    <location>
        <begin position="31"/>
        <end position="34"/>
    </location>
</feature>
<feature type="helix" evidence="2">
    <location>
        <begin position="38"/>
        <end position="47"/>
    </location>
</feature>
<feature type="strand" evidence="2">
    <location>
        <begin position="48"/>
        <end position="50"/>
    </location>
</feature>
<feature type="turn" evidence="2">
    <location>
        <begin position="51"/>
        <end position="53"/>
    </location>
</feature>
<feature type="strand" evidence="2">
    <location>
        <begin position="63"/>
        <end position="67"/>
    </location>
</feature>
<feature type="helix" evidence="2">
    <location>
        <begin position="69"/>
        <end position="73"/>
    </location>
</feature>
<feature type="strand" evidence="2">
    <location>
        <begin position="78"/>
        <end position="81"/>
    </location>
</feature>
<feature type="helix" evidence="2">
    <location>
        <begin position="85"/>
        <end position="95"/>
    </location>
</feature>
<feature type="helix" evidence="2">
    <location>
        <begin position="96"/>
        <end position="98"/>
    </location>
</feature>
<feature type="strand" evidence="2">
    <location>
        <begin position="104"/>
        <end position="107"/>
    </location>
</feature>
<feature type="turn" evidence="2">
    <location>
        <begin position="114"/>
        <end position="116"/>
    </location>
</feature>
<feature type="helix" evidence="2">
    <location>
        <begin position="119"/>
        <end position="127"/>
    </location>
</feature>
<feature type="strand" evidence="2">
    <location>
        <begin position="132"/>
        <end position="138"/>
    </location>
</feature>
<feature type="helix" evidence="2">
    <location>
        <begin position="141"/>
        <end position="145"/>
    </location>
</feature>
<feature type="strand" evidence="2">
    <location>
        <begin position="150"/>
        <end position="157"/>
    </location>
</feature>
<feature type="helix" evidence="2">
    <location>
        <begin position="159"/>
        <end position="169"/>
    </location>
</feature>
<feature type="strand" evidence="2">
    <location>
        <begin position="172"/>
        <end position="180"/>
    </location>
</feature>
<feature type="helix" evidence="2">
    <location>
        <begin position="182"/>
        <end position="204"/>
    </location>
</feature>
<feature type="helix" evidence="2">
    <location>
        <begin position="209"/>
        <end position="229"/>
    </location>
</feature>
<feature type="helix" evidence="2">
    <location>
        <begin position="234"/>
        <end position="237"/>
    </location>
</feature>
<feature type="turn" evidence="2">
    <location>
        <begin position="240"/>
        <end position="242"/>
    </location>
</feature>
<feature type="helix" evidence="2">
    <location>
        <begin position="243"/>
        <end position="251"/>
    </location>
</feature>
<feature type="helix" evidence="2">
    <location>
        <begin position="256"/>
        <end position="266"/>
    </location>
</feature>
<feature type="helix" evidence="2">
    <location>
        <begin position="270"/>
        <end position="277"/>
    </location>
</feature>
<feature type="helix" evidence="2">
    <location>
        <begin position="283"/>
        <end position="296"/>
    </location>
</feature>
<feature type="helix" evidence="2">
    <location>
        <begin position="302"/>
        <end position="312"/>
    </location>
</feature>
<feature type="helix" evidence="2">
    <location>
        <begin position="317"/>
        <end position="325"/>
    </location>
</feature>
<reference key="1">
    <citation type="journal article" date="2003" name="Proc. Natl. Acad. Sci. U.S.A.">
        <title>Complete genome sequence of the Q-fever pathogen, Coxiella burnetii.</title>
        <authorList>
            <person name="Seshadri R."/>
            <person name="Paulsen I.T."/>
            <person name="Eisen J.A."/>
            <person name="Read T.D."/>
            <person name="Nelson K.E."/>
            <person name="Nelson W.C."/>
            <person name="Ward N.L."/>
            <person name="Tettelin H."/>
            <person name="Davidsen T.M."/>
            <person name="Beanan M.J."/>
            <person name="DeBoy R.T."/>
            <person name="Daugherty S.C."/>
            <person name="Brinkac L.M."/>
            <person name="Madupu R."/>
            <person name="Dodson R.J."/>
            <person name="Khouri H.M."/>
            <person name="Lee K.H."/>
            <person name="Carty H.A."/>
            <person name="Scanlan D."/>
            <person name="Heinzen R.A."/>
            <person name="Thompson H.A."/>
            <person name="Samuel J.E."/>
            <person name="Fraser C.M."/>
            <person name="Heidelberg J.F."/>
        </authorList>
    </citation>
    <scope>NUCLEOTIDE SEQUENCE [LARGE SCALE GENOMIC DNA]</scope>
    <source>
        <strain>RSA 493 / Nine Mile phase I</strain>
    </source>
</reference>
<accession>Q83BJ0</accession>
<evidence type="ECO:0000255" key="1">
    <source>
        <dbReference type="HAMAP-Rule" id="MF_00394"/>
    </source>
</evidence>
<evidence type="ECO:0007829" key="2">
    <source>
        <dbReference type="PDB" id="3K96"/>
    </source>
</evidence>
<dbReference type="EC" id="1.1.1.94" evidence="1"/>
<dbReference type="EMBL" id="AE016828">
    <property type="protein sequence ID" value="AAO91015.1"/>
    <property type="molecule type" value="Genomic_DNA"/>
</dbReference>
<dbReference type="RefSeq" id="NP_820501.1">
    <property type="nucleotide sequence ID" value="NC_002971.4"/>
</dbReference>
<dbReference type="RefSeq" id="WP_010958277.1">
    <property type="nucleotide sequence ID" value="NZ_CCYB01000022.1"/>
</dbReference>
<dbReference type="PDB" id="3K96">
    <property type="method" value="X-ray"/>
    <property type="resolution" value="2.10 A"/>
    <property type="chains" value="A/B=1-332"/>
</dbReference>
<dbReference type="PDBsum" id="3K96"/>
<dbReference type="SMR" id="Q83BJ0"/>
<dbReference type="STRING" id="227377.CBU_1518"/>
<dbReference type="EnsemblBacteria" id="AAO91015">
    <property type="protein sequence ID" value="AAO91015"/>
    <property type="gene ID" value="CBU_1518"/>
</dbReference>
<dbReference type="GeneID" id="1209428"/>
<dbReference type="KEGG" id="cbu:CBU_1518"/>
<dbReference type="PATRIC" id="fig|227377.7.peg.1521"/>
<dbReference type="eggNOG" id="COG0240">
    <property type="taxonomic scope" value="Bacteria"/>
</dbReference>
<dbReference type="HOGENOM" id="CLU_033449_0_2_6"/>
<dbReference type="OrthoDB" id="9812273at2"/>
<dbReference type="UniPathway" id="UPA00940"/>
<dbReference type="EvolutionaryTrace" id="Q83BJ0"/>
<dbReference type="Proteomes" id="UP000002671">
    <property type="component" value="Chromosome"/>
</dbReference>
<dbReference type="GO" id="GO:0005829">
    <property type="term" value="C:cytosol"/>
    <property type="evidence" value="ECO:0000318"/>
    <property type="project" value="GO_Central"/>
</dbReference>
<dbReference type="GO" id="GO:0047952">
    <property type="term" value="F:glycerol-3-phosphate dehydrogenase [NAD(P)+] activity"/>
    <property type="evidence" value="ECO:0000318"/>
    <property type="project" value="GO_Central"/>
</dbReference>
<dbReference type="GO" id="GO:0051287">
    <property type="term" value="F:NAD binding"/>
    <property type="evidence" value="ECO:0007669"/>
    <property type="project" value="InterPro"/>
</dbReference>
<dbReference type="GO" id="GO:0005975">
    <property type="term" value="P:carbohydrate metabolic process"/>
    <property type="evidence" value="ECO:0007669"/>
    <property type="project" value="InterPro"/>
</dbReference>
<dbReference type="GO" id="GO:0046167">
    <property type="term" value="P:glycerol-3-phosphate biosynthetic process"/>
    <property type="evidence" value="ECO:0007669"/>
    <property type="project" value="UniProtKB-UniRule"/>
</dbReference>
<dbReference type="GO" id="GO:0046168">
    <property type="term" value="P:glycerol-3-phosphate catabolic process"/>
    <property type="evidence" value="ECO:0007669"/>
    <property type="project" value="InterPro"/>
</dbReference>
<dbReference type="GO" id="GO:0006072">
    <property type="term" value="P:glycerol-3-phosphate metabolic process"/>
    <property type="evidence" value="ECO:0000318"/>
    <property type="project" value="GO_Central"/>
</dbReference>
<dbReference type="GO" id="GO:0046474">
    <property type="term" value="P:glycerophospholipid biosynthetic process"/>
    <property type="evidence" value="ECO:0000318"/>
    <property type="project" value="GO_Central"/>
</dbReference>
<dbReference type="FunFam" id="1.10.1040.10:FF:000001">
    <property type="entry name" value="Glycerol-3-phosphate dehydrogenase [NAD(P)+]"/>
    <property type="match status" value="1"/>
</dbReference>
<dbReference type="FunFam" id="3.40.50.720:FF:000019">
    <property type="entry name" value="Glycerol-3-phosphate dehydrogenase [NAD(P)+]"/>
    <property type="match status" value="1"/>
</dbReference>
<dbReference type="Gene3D" id="1.10.1040.10">
    <property type="entry name" value="N-(1-d-carboxylethyl)-l-norvaline Dehydrogenase, domain 2"/>
    <property type="match status" value="1"/>
</dbReference>
<dbReference type="Gene3D" id="3.40.50.720">
    <property type="entry name" value="NAD(P)-binding Rossmann-like Domain"/>
    <property type="match status" value="1"/>
</dbReference>
<dbReference type="HAMAP" id="MF_00394">
    <property type="entry name" value="NAD_Glyc3P_dehydrog"/>
    <property type="match status" value="1"/>
</dbReference>
<dbReference type="InterPro" id="IPR008927">
    <property type="entry name" value="6-PGluconate_DH-like_C_sf"/>
</dbReference>
<dbReference type="InterPro" id="IPR013328">
    <property type="entry name" value="6PGD_dom2"/>
</dbReference>
<dbReference type="InterPro" id="IPR006168">
    <property type="entry name" value="G3P_DH_NAD-dep"/>
</dbReference>
<dbReference type="InterPro" id="IPR006109">
    <property type="entry name" value="G3P_DH_NAD-dep_C"/>
</dbReference>
<dbReference type="InterPro" id="IPR011128">
    <property type="entry name" value="G3P_DH_NAD-dep_N"/>
</dbReference>
<dbReference type="InterPro" id="IPR036291">
    <property type="entry name" value="NAD(P)-bd_dom_sf"/>
</dbReference>
<dbReference type="NCBIfam" id="NF000940">
    <property type="entry name" value="PRK00094.1-2"/>
    <property type="match status" value="1"/>
</dbReference>
<dbReference type="NCBIfam" id="NF000942">
    <property type="entry name" value="PRK00094.1-4"/>
    <property type="match status" value="1"/>
</dbReference>
<dbReference type="PANTHER" id="PTHR11728">
    <property type="entry name" value="GLYCEROL-3-PHOSPHATE DEHYDROGENASE"/>
    <property type="match status" value="1"/>
</dbReference>
<dbReference type="PANTHER" id="PTHR11728:SF1">
    <property type="entry name" value="GLYCEROL-3-PHOSPHATE DEHYDROGENASE [NAD(+)] 2, CHLOROPLASTIC"/>
    <property type="match status" value="1"/>
</dbReference>
<dbReference type="Pfam" id="PF07479">
    <property type="entry name" value="NAD_Gly3P_dh_C"/>
    <property type="match status" value="1"/>
</dbReference>
<dbReference type="Pfam" id="PF01210">
    <property type="entry name" value="NAD_Gly3P_dh_N"/>
    <property type="match status" value="1"/>
</dbReference>
<dbReference type="PIRSF" id="PIRSF000114">
    <property type="entry name" value="Glycerol-3-P_dh"/>
    <property type="match status" value="1"/>
</dbReference>
<dbReference type="PRINTS" id="PR00077">
    <property type="entry name" value="GPDHDRGNASE"/>
</dbReference>
<dbReference type="SUPFAM" id="SSF48179">
    <property type="entry name" value="6-phosphogluconate dehydrogenase C-terminal domain-like"/>
    <property type="match status" value="1"/>
</dbReference>
<dbReference type="SUPFAM" id="SSF51735">
    <property type="entry name" value="NAD(P)-binding Rossmann-fold domains"/>
    <property type="match status" value="1"/>
</dbReference>
<dbReference type="PROSITE" id="PS00957">
    <property type="entry name" value="NAD_G3PDH"/>
    <property type="match status" value="1"/>
</dbReference>
<gene>
    <name evidence="1" type="primary">gpsA</name>
    <name type="ordered locus">CBU_1518</name>
</gene>
<protein>
    <recommendedName>
        <fullName evidence="1">Glycerol-3-phosphate dehydrogenase [NAD(P)+]</fullName>
        <ecNumber evidence="1">1.1.1.94</ecNumber>
    </recommendedName>
    <alternativeName>
        <fullName evidence="1">NAD(P)(+)-dependent glycerol-3-phosphate dehydrogenase</fullName>
    </alternativeName>
    <alternativeName>
        <fullName evidence="1">NAD(P)H-dependent dihydroxyacetone-phosphate reductase</fullName>
    </alternativeName>
</protein>
<name>GPDA_COXBU</name>
<organism>
    <name type="scientific">Coxiella burnetii (strain RSA 493 / Nine Mile phase I)</name>
    <dbReference type="NCBI Taxonomy" id="227377"/>
    <lineage>
        <taxon>Bacteria</taxon>
        <taxon>Pseudomonadati</taxon>
        <taxon>Pseudomonadota</taxon>
        <taxon>Gammaproteobacteria</taxon>
        <taxon>Legionellales</taxon>
        <taxon>Coxiellaceae</taxon>
        <taxon>Coxiella</taxon>
    </lineage>
</organism>
<proteinExistence type="evidence at protein level"/>